<name>SYG_MYCGE</name>
<evidence type="ECO:0000255" key="1">
    <source>
        <dbReference type="HAMAP-Rule" id="MF_00253"/>
    </source>
</evidence>
<protein>
    <recommendedName>
        <fullName evidence="1">Glycine--tRNA ligase</fullName>
        <ecNumber evidence="1">6.1.1.14</ecNumber>
    </recommendedName>
    <alternativeName>
        <fullName evidence="1">Glycyl-tRNA synthetase</fullName>
        <shortName evidence="1">GlyRS</shortName>
    </alternativeName>
</protein>
<sequence>MAKVYNQEVYVQFLKQHGFVFQSSEIYNGLNNSWDFGPLGAVLKQQIKQALYNFFIKNKADVLLVETPIILSELVWKASGHLANFVDTLVDCKSCKYRFRVDQINAEIKAKKDWNSFKVNCPNCHNQNWSEVRDFNLLFQTEIGVVNNDKRLVFLRPETAQGSFINFKNILQAKKRNLPFAIAQFGKSFRNEITPGNFLFRTREFEQFEIEWFCKPDDANSLFEKQLIMVEQFLQTVLKINPELLKKHEYDQSELAHYAKKTTDFLFNFPHGLKELWGLANRGDFDLKQHQEFSKKSMSFFDSELNQHFLPFIIEPAVGIERLFYALIVSSYRREIINEEEREVLSLPFDLCPEQIIVLPLVNKLKKEAFSVFETLAKTRWRVCFETTGSIGKRYRKADAIGIKYAVTFDFESLEDNAVTIRDRDTLVQQRIAIKELPQWFMKNGQ</sequence>
<accession>P47493</accession>
<feature type="chain" id="PRO_0000072964" description="Glycine--tRNA ligase">
    <location>
        <begin position="1"/>
        <end position="446"/>
    </location>
</feature>
<feature type="binding site" evidence="1">
    <location>
        <position position="100"/>
    </location>
    <ligand>
        <name>substrate</name>
    </ligand>
</feature>
<feature type="binding site" evidence="1">
    <location>
        <position position="158"/>
    </location>
    <ligand>
        <name>substrate</name>
    </ligand>
</feature>
<feature type="binding site" evidence="1">
    <location>
        <begin position="190"/>
        <end position="192"/>
    </location>
    <ligand>
        <name>ATP</name>
        <dbReference type="ChEBI" id="CHEBI:30616"/>
    </ligand>
</feature>
<feature type="binding site" evidence="1">
    <location>
        <begin position="200"/>
        <end position="205"/>
    </location>
    <ligand>
        <name>ATP</name>
        <dbReference type="ChEBI" id="CHEBI:30616"/>
    </ligand>
</feature>
<feature type="binding site" evidence="1">
    <location>
        <begin position="205"/>
        <end position="209"/>
    </location>
    <ligand>
        <name>substrate</name>
    </ligand>
</feature>
<feature type="binding site" evidence="1">
    <location>
        <begin position="275"/>
        <end position="276"/>
    </location>
    <ligand>
        <name>ATP</name>
        <dbReference type="ChEBI" id="CHEBI:30616"/>
    </ligand>
</feature>
<feature type="binding site" evidence="1">
    <location>
        <begin position="315"/>
        <end position="319"/>
    </location>
    <ligand>
        <name>substrate</name>
    </ligand>
</feature>
<feature type="binding site" evidence="1">
    <location>
        <begin position="319"/>
        <end position="322"/>
    </location>
    <ligand>
        <name>ATP</name>
        <dbReference type="ChEBI" id="CHEBI:30616"/>
    </ligand>
</feature>
<reference key="1">
    <citation type="journal article" date="1995" name="Science">
        <title>The minimal gene complement of Mycoplasma genitalium.</title>
        <authorList>
            <person name="Fraser C.M."/>
            <person name="Gocayne J.D."/>
            <person name="White O."/>
            <person name="Adams M.D."/>
            <person name="Clayton R.A."/>
            <person name="Fleischmann R.D."/>
            <person name="Bult C.J."/>
            <person name="Kerlavage A.R."/>
            <person name="Sutton G.G."/>
            <person name="Kelley J.M."/>
            <person name="Fritchman J.L."/>
            <person name="Weidman J.F."/>
            <person name="Small K.V."/>
            <person name="Sandusky M."/>
            <person name="Fuhrmann J.L."/>
            <person name="Nguyen D.T."/>
            <person name="Utterback T.R."/>
            <person name="Saudek D.M."/>
            <person name="Phillips C.A."/>
            <person name="Merrick J.M."/>
            <person name="Tomb J.-F."/>
            <person name="Dougherty B.A."/>
            <person name="Bott K.F."/>
            <person name="Hu P.-C."/>
            <person name="Lucier T.S."/>
            <person name="Peterson S.N."/>
            <person name="Smith H.O."/>
            <person name="Hutchison C.A. III"/>
            <person name="Venter J.C."/>
        </authorList>
    </citation>
    <scope>NUCLEOTIDE SEQUENCE [LARGE SCALE GENOMIC DNA]</scope>
    <source>
        <strain>ATCC 33530 / DSM 19775 / NCTC 10195 / G37</strain>
    </source>
</reference>
<dbReference type="EC" id="6.1.1.14" evidence="1"/>
<dbReference type="EMBL" id="L43967">
    <property type="protein sequence ID" value="AAC71471.1"/>
    <property type="molecule type" value="Genomic_DNA"/>
</dbReference>
<dbReference type="PIR" id="G64227">
    <property type="entry name" value="G64227"/>
</dbReference>
<dbReference type="RefSeq" id="WP_010869392.1">
    <property type="nucleotide sequence ID" value="NC_000908.2"/>
</dbReference>
<dbReference type="SMR" id="P47493"/>
<dbReference type="STRING" id="243273.MG_251"/>
<dbReference type="GeneID" id="88282397"/>
<dbReference type="KEGG" id="mge:MG_251"/>
<dbReference type="eggNOG" id="COG0423">
    <property type="taxonomic scope" value="Bacteria"/>
</dbReference>
<dbReference type="HOGENOM" id="CLU_015515_2_0_14"/>
<dbReference type="InParanoid" id="P47493"/>
<dbReference type="OrthoDB" id="9760853at2"/>
<dbReference type="BioCyc" id="MGEN243273:G1GJ2-298-MONOMER"/>
<dbReference type="Proteomes" id="UP000000807">
    <property type="component" value="Chromosome"/>
</dbReference>
<dbReference type="GO" id="GO:0005737">
    <property type="term" value="C:cytoplasm"/>
    <property type="evidence" value="ECO:0000318"/>
    <property type="project" value="GO_Central"/>
</dbReference>
<dbReference type="GO" id="GO:0005524">
    <property type="term" value="F:ATP binding"/>
    <property type="evidence" value="ECO:0007669"/>
    <property type="project" value="UniProtKB-UniRule"/>
</dbReference>
<dbReference type="GO" id="GO:0004820">
    <property type="term" value="F:glycine-tRNA ligase activity"/>
    <property type="evidence" value="ECO:0000250"/>
    <property type="project" value="UniProtKB"/>
</dbReference>
<dbReference type="GO" id="GO:0046983">
    <property type="term" value="F:protein dimerization activity"/>
    <property type="evidence" value="ECO:0000250"/>
    <property type="project" value="UniProtKB"/>
</dbReference>
<dbReference type="GO" id="GO:0006426">
    <property type="term" value="P:glycyl-tRNA aminoacylation"/>
    <property type="evidence" value="ECO:0000318"/>
    <property type="project" value="GO_Central"/>
</dbReference>
<dbReference type="CDD" id="cd00774">
    <property type="entry name" value="GlyRS-like_core"/>
    <property type="match status" value="1"/>
</dbReference>
<dbReference type="Gene3D" id="3.40.50.800">
    <property type="entry name" value="Anticodon-binding domain"/>
    <property type="match status" value="1"/>
</dbReference>
<dbReference type="Gene3D" id="3.30.930.10">
    <property type="entry name" value="Bira Bifunctional Protein, Domain 2"/>
    <property type="match status" value="1"/>
</dbReference>
<dbReference type="HAMAP" id="MF_00253_B">
    <property type="entry name" value="Gly_tRNA_synth_B"/>
    <property type="match status" value="1"/>
</dbReference>
<dbReference type="InterPro" id="IPR002314">
    <property type="entry name" value="aa-tRNA-synt_IIb"/>
</dbReference>
<dbReference type="InterPro" id="IPR006195">
    <property type="entry name" value="aa-tRNA-synth_II"/>
</dbReference>
<dbReference type="InterPro" id="IPR045864">
    <property type="entry name" value="aa-tRNA-synth_II/BPL/LPL"/>
</dbReference>
<dbReference type="InterPro" id="IPR004154">
    <property type="entry name" value="Anticodon-bd"/>
</dbReference>
<dbReference type="InterPro" id="IPR036621">
    <property type="entry name" value="Anticodon-bd_dom_sf"/>
</dbReference>
<dbReference type="InterPro" id="IPR027031">
    <property type="entry name" value="Gly-tRNA_synthase/POLG2"/>
</dbReference>
<dbReference type="InterPro" id="IPR022961">
    <property type="entry name" value="Gly_tRNA_ligase_bac"/>
</dbReference>
<dbReference type="InterPro" id="IPR033731">
    <property type="entry name" value="GlyRS-like_core"/>
</dbReference>
<dbReference type="InterPro" id="IPR002315">
    <property type="entry name" value="tRNA-synt_gly"/>
</dbReference>
<dbReference type="NCBIfam" id="TIGR00389">
    <property type="entry name" value="glyS_dimeric"/>
    <property type="match status" value="1"/>
</dbReference>
<dbReference type="NCBIfam" id="NF003211">
    <property type="entry name" value="PRK04173.1"/>
    <property type="match status" value="1"/>
</dbReference>
<dbReference type="PANTHER" id="PTHR10745:SF8">
    <property type="entry name" value="DNA POLYMERASE SUBUNIT GAMMA-2, MITOCHONDRIAL"/>
    <property type="match status" value="1"/>
</dbReference>
<dbReference type="PANTHER" id="PTHR10745">
    <property type="entry name" value="GLYCYL-TRNA SYNTHETASE/DNA POLYMERASE SUBUNIT GAMMA-2"/>
    <property type="match status" value="1"/>
</dbReference>
<dbReference type="Pfam" id="PF03129">
    <property type="entry name" value="HGTP_anticodon"/>
    <property type="match status" value="1"/>
</dbReference>
<dbReference type="Pfam" id="PF00587">
    <property type="entry name" value="tRNA-synt_2b"/>
    <property type="match status" value="1"/>
</dbReference>
<dbReference type="PRINTS" id="PR01043">
    <property type="entry name" value="TRNASYNTHGLY"/>
</dbReference>
<dbReference type="SUPFAM" id="SSF52954">
    <property type="entry name" value="Class II aaRS ABD-related"/>
    <property type="match status" value="1"/>
</dbReference>
<dbReference type="SUPFAM" id="SSF55681">
    <property type="entry name" value="Class II aaRS and biotin synthetases"/>
    <property type="match status" value="1"/>
</dbReference>
<dbReference type="PROSITE" id="PS50862">
    <property type="entry name" value="AA_TRNA_LIGASE_II"/>
    <property type="match status" value="1"/>
</dbReference>
<proteinExistence type="inferred from homology"/>
<organism>
    <name type="scientific">Mycoplasma genitalium (strain ATCC 33530 / DSM 19775 / NCTC 10195 / G37)</name>
    <name type="common">Mycoplasmoides genitalium</name>
    <dbReference type="NCBI Taxonomy" id="243273"/>
    <lineage>
        <taxon>Bacteria</taxon>
        <taxon>Bacillati</taxon>
        <taxon>Mycoplasmatota</taxon>
        <taxon>Mycoplasmoidales</taxon>
        <taxon>Mycoplasmoidaceae</taxon>
        <taxon>Mycoplasmoides</taxon>
    </lineage>
</organism>
<gene>
    <name evidence="1" type="primary">glyQS</name>
    <name type="synonym">glyS</name>
    <name type="ordered locus">MG251</name>
</gene>
<keyword id="KW-0030">Aminoacyl-tRNA synthetase</keyword>
<keyword id="KW-0067">ATP-binding</keyword>
<keyword id="KW-0963">Cytoplasm</keyword>
<keyword id="KW-0436">Ligase</keyword>
<keyword id="KW-0547">Nucleotide-binding</keyword>
<keyword id="KW-0648">Protein biosynthesis</keyword>
<keyword id="KW-1185">Reference proteome</keyword>
<comment type="function">
    <text evidence="1">Catalyzes the attachment of glycine to tRNA(Gly).</text>
</comment>
<comment type="catalytic activity">
    <reaction evidence="1">
        <text>tRNA(Gly) + glycine + ATP = glycyl-tRNA(Gly) + AMP + diphosphate</text>
        <dbReference type="Rhea" id="RHEA:16013"/>
        <dbReference type="Rhea" id="RHEA-COMP:9664"/>
        <dbReference type="Rhea" id="RHEA-COMP:9683"/>
        <dbReference type="ChEBI" id="CHEBI:30616"/>
        <dbReference type="ChEBI" id="CHEBI:33019"/>
        <dbReference type="ChEBI" id="CHEBI:57305"/>
        <dbReference type="ChEBI" id="CHEBI:78442"/>
        <dbReference type="ChEBI" id="CHEBI:78522"/>
        <dbReference type="ChEBI" id="CHEBI:456215"/>
        <dbReference type="EC" id="6.1.1.14"/>
    </reaction>
</comment>
<comment type="subunit">
    <text evidence="1">Homodimer.</text>
</comment>
<comment type="subcellular location">
    <subcellularLocation>
        <location evidence="1">Cytoplasm</location>
    </subcellularLocation>
</comment>
<comment type="similarity">
    <text evidence="1">Belongs to the class-II aminoacyl-tRNA synthetase family.</text>
</comment>